<dbReference type="Proteomes" id="UP000504610">
    <property type="component" value="Unplaced"/>
</dbReference>
<dbReference type="GO" id="GO:0008289">
    <property type="term" value="F:lipid binding"/>
    <property type="evidence" value="ECO:0007669"/>
    <property type="project" value="UniProtKB-KW"/>
</dbReference>
<dbReference type="GO" id="GO:0050832">
    <property type="term" value="P:defense response to fungus"/>
    <property type="evidence" value="ECO:0007669"/>
    <property type="project" value="UniProtKB-KW"/>
</dbReference>
<dbReference type="GO" id="GO:0031640">
    <property type="term" value="P:killing of cells of another organism"/>
    <property type="evidence" value="ECO:0007669"/>
    <property type="project" value="UniProtKB-KW"/>
</dbReference>
<dbReference type="GO" id="GO:0006869">
    <property type="term" value="P:lipid transport"/>
    <property type="evidence" value="ECO:0007669"/>
    <property type="project" value="InterPro"/>
</dbReference>
<dbReference type="Gene3D" id="1.10.110.10">
    <property type="entry name" value="Plant lipid-transfer and hydrophobic proteins"/>
    <property type="match status" value="1"/>
</dbReference>
<dbReference type="InterPro" id="IPR036312">
    <property type="entry name" value="Bifun_inhib/LTP/seed_sf"/>
</dbReference>
<dbReference type="InterPro" id="IPR016140">
    <property type="entry name" value="Bifunc_inhib/LTP/seed_store"/>
</dbReference>
<dbReference type="InterPro" id="IPR000528">
    <property type="entry name" value="Plant_nsLTP"/>
</dbReference>
<dbReference type="Pfam" id="PF00234">
    <property type="entry name" value="Tryp_alpha_amyl"/>
    <property type="match status" value="1"/>
</dbReference>
<dbReference type="PRINTS" id="PR00382">
    <property type="entry name" value="LIPIDTRNSFER"/>
</dbReference>
<dbReference type="SUPFAM" id="SSF47699">
    <property type="entry name" value="Bifunctional inhibitor/lipid-transfer protein/seed storage 2S albumin"/>
    <property type="match status" value="1"/>
</dbReference>
<organism>
    <name type="scientific">Raphanus sativus</name>
    <name type="common">Radish</name>
    <name type="synonym">Raphanus raphanistrum var. sativus</name>
    <dbReference type="NCBI Taxonomy" id="3726"/>
    <lineage>
        <taxon>Eukaryota</taxon>
        <taxon>Viridiplantae</taxon>
        <taxon>Streptophyta</taxon>
        <taxon>Embryophyta</taxon>
        <taxon>Tracheophyta</taxon>
        <taxon>Spermatophyta</taxon>
        <taxon>Magnoliopsida</taxon>
        <taxon>eudicotyledons</taxon>
        <taxon>Gunneridae</taxon>
        <taxon>Pentapetalae</taxon>
        <taxon>rosids</taxon>
        <taxon>malvids</taxon>
        <taxon>Brassicales</taxon>
        <taxon>Brassicaceae</taxon>
        <taxon>Brassiceae</taxon>
        <taxon>Raphanus</taxon>
    </lineage>
</organism>
<comment type="function">
    <text>Plant non-specific lipid-transfer proteins transfer phospholipids as well as galactolipids across membranes. May play a role in wax or cutin deposition in the cell walls of expanding epidermal cells and certain secretory tissues. This isoform inhibits the hyphal growth of several fungi in vitro.</text>
</comment>
<comment type="subunit">
    <text>Homodimer.</text>
</comment>
<comment type="similarity">
    <text evidence="1">Belongs to the plant LTP family.</text>
</comment>
<feature type="chain" id="PRO_0000153881" description="Seed non-specific lipid transfer protein-like">
    <location>
        <begin position="1"/>
        <end position="43" status="greater than"/>
    </location>
</feature>
<feature type="non-terminal residue">
    <location>
        <position position="43"/>
    </location>
</feature>
<name>NLTP_RAPSA</name>
<sequence length="43" mass="4312">ALSCGTVNSNLAACIGYLTQNAPLARGCCTGVTNLNNMAXTTP</sequence>
<accession>P29420</accession>
<evidence type="ECO:0000305" key="1"/>
<proteinExistence type="evidence at protein level"/>
<protein>
    <recommendedName>
        <fullName>Seed non-specific lipid transfer protein-like</fullName>
        <shortName>LTP</shortName>
    </recommendedName>
</protein>
<reference key="1">
    <citation type="journal article" date="1992" name="Plant Physiol.">
        <title>In vitro antifungal activity of a radish (Raphanus sativus L.) seed protein homologous to non-specific lipid transfer proteins.</title>
        <authorList>
            <person name="Terras F.R.G."/>
            <person name="Goderis I.J."/>
            <person name="van Leuven F."/>
            <person name="Vanderleyden J."/>
            <person name="Cammue B.P.A."/>
            <person name="Broekaert W.F."/>
        </authorList>
    </citation>
    <scope>PROTEIN SEQUENCE</scope>
    <source>
        <tissue>Seed</tissue>
    </source>
</reference>
<keyword id="KW-0929">Antimicrobial</keyword>
<keyword id="KW-0903">Direct protein sequencing</keyword>
<keyword id="KW-0295">Fungicide</keyword>
<keyword id="KW-0446">Lipid-binding</keyword>
<keyword id="KW-0611">Plant defense</keyword>
<keyword id="KW-1185">Reference proteome</keyword>
<keyword id="KW-0813">Transport</keyword>